<reference key="1">
    <citation type="journal article" date="2003" name="Genome Res.">
        <title>Comparative genome analysis of Vibrio vulnificus, a marine pathogen.</title>
        <authorList>
            <person name="Chen C.-Y."/>
            <person name="Wu K.-M."/>
            <person name="Chang Y.-C."/>
            <person name="Chang C.-H."/>
            <person name="Tsai H.-C."/>
            <person name="Liao T.-L."/>
            <person name="Liu Y.-M."/>
            <person name="Chen H.-J."/>
            <person name="Shen A.B.-T."/>
            <person name="Li J.-C."/>
            <person name="Su T.-L."/>
            <person name="Shao C.-P."/>
            <person name="Lee C.-T."/>
            <person name="Hor L.-I."/>
            <person name="Tsai S.-F."/>
        </authorList>
    </citation>
    <scope>NUCLEOTIDE SEQUENCE [LARGE SCALE GENOMIC DNA]</scope>
    <source>
        <strain>YJ016</strain>
    </source>
</reference>
<proteinExistence type="inferred from homology"/>
<name>LPXK_VIBVY</name>
<protein>
    <recommendedName>
        <fullName evidence="1">Tetraacyldisaccharide 4'-kinase</fullName>
        <ecNumber evidence="1">2.7.1.130</ecNumber>
    </recommendedName>
    <alternativeName>
        <fullName evidence="1">Lipid A 4'-kinase</fullName>
    </alternativeName>
</protein>
<evidence type="ECO:0000255" key="1">
    <source>
        <dbReference type="HAMAP-Rule" id="MF_00409"/>
    </source>
</evidence>
<dbReference type="EC" id="2.7.1.130" evidence="1"/>
<dbReference type="EMBL" id="BA000037">
    <property type="protein sequence ID" value="BAC95119.1"/>
    <property type="molecule type" value="Genomic_DNA"/>
</dbReference>
<dbReference type="RefSeq" id="WP_011150832.1">
    <property type="nucleotide sequence ID" value="NC_005139.1"/>
</dbReference>
<dbReference type="SMR" id="Q7MJ08"/>
<dbReference type="STRING" id="672.VV93_v1c20650"/>
<dbReference type="KEGG" id="vvy:VV2355"/>
<dbReference type="eggNOG" id="COG1663">
    <property type="taxonomic scope" value="Bacteria"/>
</dbReference>
<dbReference type="HOGENOM" id="CLU_038816_2_0_6"/>
<dbReference type="UniPathway" id="UPA00359">
    <property type="reaction ID" value="UER00482"/>
</dbReference>
<dbReference type="Proteomes" id="UP000002675">
    <property type="component" value="Chromosome I"/>
</dbReference>
<dbReference type="GO" id="GO:0005886">
    <property type="term" value="C:plasma membrane"/>
    <property type="evidence" value="ECO:0007669"/>
    <property type="project" value="TreeGrafter"/>
</dbReference>
<dbReference type="GO" id="GO:0005524">
    <property type="term" value="F:ATP binding"/>
    <property type="evidence" value="ECO:0007669"/>
    <property type="project" value="UniProtKB-UniRule"/>
</dbReference>
<dbReference type="GO" id="GO:0009029">
    <property type="term" value="F:tetraacyldisaccharide 4'-kinase activity"/>
    <property type="evidence" value="ECO:0007669"/>
    <property type="project" value="UniProtKB-UniRule"/>
</dbReference>
<dbReference type="GO" id="GO:0009245">
    <property type="term" value="P:lipid A biosynthetic process"/>
    <property type="evidence" value="ECO:0007669"/>
    <property type="project" value="UniProtKB-UniRule"/>
</dbReference>
<dbReference type="GO" id="GO:0009244">
    <property type="term" value="P:lipopolysaccharide core region biosynthetic process"/>
    <property type="evidence" value="ECO:0007669"/>
    <property type="project" value="TreeGrafter"/>
</dbReference>
<dbReference type="HAMAP" id="MF_00409">
    <property type="entry name" value="LpxK"/>
    <property type="match status" value="1"/>
</dbReference>
<dbReference type="InterPro" id="IPR003758">
    <property type="entry name" value="LpxK"/>
</dbReference>
<dbReference type="InterPro" id="IPR027417">
    <property type="entry name" value="P-loop_NTPase"/>
</dbReference>
<dbReference type="NCBIfam" id="TIGR00682">
    <property type="entry name" value="lpxK"/>
    <property type="match status" value="1"/>
</dbReference>
<dbReference type="PANTHER" id="PTHR42724">
    <property type="entry name" value="TETRAACYLDISACCHARIDE 4'-KINASE"/>
    <property type="match status" value="1"/>
</dbReference>
<dbReference type="PANTHER" id="PTHR42724:SF1">
    <property type="entry name" value="TETRAACYLDISACCHARIDE 4'-KINASE, MITOCHONDRIAL-RELATED"/>
    <property type="match status" value="1"/>
</dbReference>
<dbReference type="Pfam" id="PF02606">
    <property type="entry name" value="LpxK"/>
    <property type="match status" value="1"/>
</dbReference>
<dbReference type="SUPFAM" id="SSF52540">
    <property type="entry name" value="P-loop containing nucleoside triphosphate hydrolases"/>
    <property type="match status" value="1"/>
</dbReference>
<comment type="function">
    <text evidence="1">Transfers the gamma-phosphate of ATP to the 4'-position of a tetraacyldisaccharide 1-phosphate intermediate (termed DS-1-P) to form tetraacyldisaccharide 1,4'-bis-phosphate (lipid IVA).</text>
</comment>
<comment type="catalytic activity">
    <reaction evidence="1">
        <text>a lipid A disaccharide + ATP = a lipid IVA + ADP + H(+)</text>
        <dbReference type="Rhea" id="RHEA:67840"/>
        <dbReference type="ChEBI" id="CHEBI:15378"/>
        <dbReference type="ChEBI" id="CHEBI:30616"/>
        <dbReference type="ChEBI" id="CHEBI:176343"/>
        <dbReference type="ChEBI" id="CHEBI:176425"/>
        <dbReference type="ChEBI" id="CHEBI:456216"/>
        <dbReference type="EC" id="2.7.1.130"/>
    </reaction>
</comment>
<comment type="pathway">
    <text evidence="1">Glycolipid biosynthesis; lipid IV(A) biosynthesis; lipid IV(A) from (3R)-3-hydroxytetradecanoyl-[acyl-carrier-protein] and UDP-N-acetyl-alpha-D-glucosamine: step 6/6.</text>
</comment>
<comment type="similarity">
    <text evidence="1">Belongs to the LpxK family.</text>
</comment>
<accession>Q7MJ08</accession>
<sequence>MIEKIWFENHPVKYLLWPLLWPLSLLFGAISRRQKAAYQRGAKASFQASIPVIVVGNITAGGNGKTPVVIWLVEKLQQLGFKPGVVSRGYGAKAPVYPMVVDSESLTSHCGDEPKLIFERTGALVAVDPIRPNAVKRLIELGANIIVTDDGLQHYALQRDIEVVVVDGQRRFGNQQLIPLGPLREPTSRLQNVDFIITNGGDAHQGEIAMSLMPDMAVNLMTGEKVAVNELASLVAFAGIGHPPRFFKTLEQLGADVVVSQGFADHQDFDPEAIAKLAHQGKNVIMTEKDAVKCRRFAQNNWWYLPVSAQFSSHDQQRILQRITEVVKEYGSSTA</sequence>
<keyword id="KW-0067">ATP-binding</keyword>
<keyword id="KW-0418">Kinase</keyword>
<keyword id="KW-0441">Lipid A biosynthesis</keyword>
<keyword id="KW-0444">Lipid biosynthesis</keyword>
<keyword id="KW-0443">Lipid metabolism</keyword>
<keyword id="KW-0547">Nucleotide-binding</keyword>
<keyword id="KW-0808">Transferase</keyword>
<gene>
    <name evidence="1" type="primary">lpxK</name>
    <name type="ordered locus">VV2355</name>
</gene>
<organism>
    <name type="scientific">Vibrio vulnificus (strain YJ016)</name>
    <dbReference type="NCBI Taxonomy" id="196600"/>
    <lineage>
        <taxon>Bacteria</taxon>
        <taxon>Pseudomonadati</taxon>
        <taxon>Pseudomonadota</taxon>
        <taxon>Gammaproteobacteria</taxon>
        <taxon>Vibrionales</taxon>
        <taxon>Vibrionaceae</taxon>
        <taxon>Vibrio</taxon>
    </lineage>
</organism>
<feature type="chain" id="PRO_0000190956" description="Tetraacyldisaccharide 4'-kinase">
    <location>
        <begin position="1"/>
        <end position="335"/>
    </location>
</feature>
<feature type="binding site" evidence="1">
    <location>
        <begin position="59"/>
        <end position="66"/>
    </location>
    <ligand>
        <name>ATP</name>
        <dbReference type="ChEBI" id="CHEBI:30616"/>
    </ligand>
</feature>